<reference key="1">
    <citation type="journal article" date="2007" name="Dev. Comp. Immunol.">
        <title>Molecular cloning of bovine chemokine receptors and expression by WC1+ gammadelta T cells.</title>
        <authorList>
            <person name="Blumerman S.L."/>
            <person name="Wang F."/>
            <person name="Herzig C.T."/>
            <person name="Baldwin C.L."/>
        </authorList>
    </citation>
    <scope>NUCLEOTIDE SEQUENCE [MRNA]</scope>
</reference>
<feature type="signal peptide" evidence="2">
    <location>
        <begin position="1"/>
        <end position="24"/>
    </location>
</feature>
<feature type="chain" id="PRO_0000291858" description="C-C chemokine receptor type 7">
    <location>
        <begin position="25"/>
        <end position="379"/>
    </location>
</feature>
<feature type="topological domain" description="Extracellular" evidence="2">
    <location>
        <begin position="25"/>
        <end position="59"/>
    </location>
</feature>
<feature type="transmembrane region" description="Helical; Name=1" evidence="2">
    <location>
        <begin position="60"/>
        <end position="86"/>
    </location>
</feature>
<feature type="topological domain" description="Cytoplasmic" evidence="2">
    <location>
        <begin position="87"/>
        <end position="95"/>
    </location>
</feature>
<feature type="transmembrane region" description="Helical; Name=2" evidence="2">
    <location>
        <begin position="96"/>
        <end position="116"/>
    </location>
</feature>
<feature type="topological domain" description="Extracellular" evidence="2">
    <location>
        <begin position="117"/>
        <end position="130"/>
    </location>
</feature>
<feature type="transmembrane region" description="Helical; Name=3" evidence="2">
    <location>
        <begin position="131"/>
        <end position="152"/>
    </location>
</feature>
<feature type="topological domain" description="Cytoplasmic" evidence="2">
    <location>
        <begin position="153"/>
        <end position="170"/>
    </location>
</feature>
<feature type="transmembrane region" description="Helical; Name=4" evidence="2">
    <location>
        <begin position="171"/>
        <end position="191"/>
    </location>
</feature>
<feature type="topological domain" description="Extracellular" evidence="2">
    <location>
        <begin position="192"/>
        <end position="219"/>
    </location>
</feature>
<feature type="transmembrane region" description="Helical; Name=5" evidence="2">
    <location>
        <begin position="220"/>
        <end position="247"/>
    </location>
</feature>
<feature type="topological domain" description="Cytoplasmic" evidence="2">
    <location>
        <begin position="248"/>
        <end position="263"/>
    </location>
</feature>
<feature type="transmembrane region" description="Helical; Name=6" evidence="2">
    <location>
        <begin position="264"/>
        <end position="289"/>
    </location>
</feature>
<feature type="topological domain" description="Extracellular" evidence="2">
    <location>
        <begin position="290"/>
        <end position="314"/>
    </location>
</feature>
<feature type="transmembrane region" description="Helical; Name=7" evidence="2">
    <location>
        <begin position="315"/>
        <end position="332"/>
    </location>
</feature>
<feature type="topological domain" description="Cytoplasmic" evidence="2">
    <location>
        <begin position="333"/>
        <end position="379"/>
    </location>
</feature>
<feature type="glycosylation site" description="N-linked (GlcNAc...) asparagine" evidence="2">
    <location>
        <position position="36"/>
    </location>
</feature>
<feature type="glycosylation site" description="N-linked (GlcNAc...) asparagine" evidence="2">
    <location>
        <position position="292"/>
    </location>
</feature>
<feature type="disulfide bond" evidence="3">
    <location>
        <begin position="129"/>
        <end position="210"/>
    </location>
</feature>
<dbReference type="EMBL" id="AY834253">
    <property type="protein sequence ID" value="AAV97930.1"/>
    <property type="molecule type" value="mRNA"/>
</dbReference>
<dbReference type="SMR" id="Q5MD62"/>
<dbReference type="FunCoup" id="Q5MD62">
    <property type="interactions" value="318"/>
</dbReference>
<dbReference type="STRING" id="9913.ENSBTAP00000071622"/>
<dbReference type="GlyCosmos" id="Q5MD62">
    <property type="glycosylation" value="2 sites, No reported glycans"/>
</dbReference>
<dbReference type="GlyGen" id="Q5MD62">
    <property type="glycosylation" value="2 sites"/>
</dbReference>
<dbReference type="PaxDb" id="9913-ENSBTAP00000052953"/>
<dbReference type="eggNOG" id="ENOG502QUZ9">
    <property type="taxonomic scope" value="Eukaryota"/>
</dbReference>
<dbReference type="InParanoid" id="Q5MD62"/>
<dbReference type="OrthoDB" id="9944829at2759"/>
<dbReference type="Proteomes" id="UP000009136">
    <property type="component" value="Unplaced"/>
</dbReference>
<dbReference type="GO" id="GO:0009897">
    <property type="term" value="C:external side of plasma membrane"/>
    <property type="evidence" value="ECO:0000318"/>
    <property type="project" value="GO_Central"/>
</dbReference>
<dbReference type="GO" id="GO:0038117">
    <property type="term" value="F:C-C motif chemokine 19 receptor activity"/>
    <property type="evidence" value="ECO:0000318"/>
    <property type="project" value="GO_Central"/>
</dbReference>
<dbReference type="GO" id="GO:0035757">
    <property type="term" value="F:chemokine (C-C motif) ligand 19 binding"/>
    <property type="evidence" value="ECO:0000318"/>
    <property type="project" value="GO_Central"/>
</dbReference>
<dbReference type="GO" id="GO:0035758">
    <property type="term" value="F:chemokine (C-C motif) ligand 21 binding"/>
    <property type="evidence" value="ECO:0000318"/>
    <property type="project" value="GO_Central"/>
</dbReference>
<dbReference type="GO" id="GO:0019722">
    <property type="term" value="P:calcium-mediated signaling"/>
    <property type="evidence" value="ECO:0000318"/>
    <property type="project" value="GO_Central"/>
</dbReference>
<dbReference type="GO" id="GO:0060326">
    <property type="term" value="P:cell chemotaxis"/>
    <property type="evidence" value="ECO:0000318"/>
    <property type="project" value="GO_Central"/>
</dbReference>
<dbReference type="GO" id="GO:0006955">
    <property type="term" value="P:immune response"/>
    <property type="evidence" value="ECO:0000318"/>
    <property type="project" value="GO_Central"/>
</dbReference>
<dbReference type="GO" id="GO:0006954">
    <property type="term" value="P:inflammatory response"/>
    <property type="evidence" value="ECO:0007669"/>
    <property type="project" value="InterPro"/>
</dbReference>
<dbReference type="GO" id="GO:0007204">
    <property type="term" value="P:positive regulation of cytosolic calcium ion concentration"/>
    <property type="evidence" value="ECO:0000318"/>
    <property type="project" value="GO_Central"/>
</dbReference>
<dbReference type="CDD" id="cd15175">
    <property type="entry name" value="7tmA_CCR7"/>
    <property type="match status" value="1"/>
</dbReference>
<dbReference type="FunFam" id="1.20.1070.10:FF:000035">
    <property type="entry name" value="C-C chemokine receptor type 6"/>
    <property type="match status" value="1"/>
</dbReference>
<dbReference type="Gene3D" id="1.20.1070.10">
    <property type="entry name" value="Rhodopsin 7-helix transmembrane proteins"/>
    <property type="match status" value="1"/>
</dbReference>
<dbReference type="InterPro" id="IPR050119">
    <property type="entry name" value="CCR1-9-like"/>
</dbReference>
<dbReference type="InterPro" id="IPR001718">
    <property type="entry name" value="Chemokine_CCR7"/>
</dbReference>
<dbReference type="InterPro" id="IPR000355">
    <property type="entry name" value="Chemokine_rcpt"/>
</dbReference>
<dbReference type="InterPro" id="IPR000276">
    <property type="entry name" value="GPCR_Rhodpsn"/>
</dbReference>
<dbReference type="InterPro" id="IPR017452">
    <property type="entry name" value="GPCR_Rhodpsn_7TM"/>
</dbReference>
<dbReference type="PANTHER" id="PTHR10489:SF635">
    <property type="entry name" value="C-C CHEMOKINE RECEPTOR TYPE 7"/>
    <property type="match status" value="1"/>
</dbReference>
<dbReference type="PANTHER" id="PTHR10489">
    <property type="entry name" value="CELL ADHESION MOLECULE"/>
    <property type="match status" value="1"/>
</dbReference>
<dbReference type="Pfam" id="PF00001">
    <property type="entry name" value="7tm_1"/>
    <property type="match status" value="1"/>
</dbReference>
<dbReference type="PRINTS" id="PR00657">
    <property type="entry name" value="CCCHEMOKINER"/>
</dbReference>
<dbReference type="PRINTS" id="PR00641">
    <property type="entry name" value="CHEMOKINER7"/>
</dbReference>
<dbReference type="PRINTS" id="PR00237">
    <property type="entry name" value="GPCRRHODOPSN"/>
</dbReference>
<dbReference type="SUPFAM" id="SSF81321">
    <property type="entry name" value="Family A G protein-coupled receptor-like"/>
    <property type="match status" value="1"/>
</dbReference>
<dbReference type="PROSITE" id="PS00237">
    <property type="entry name" value="G_PROTEIN_RECEP_F1_1"/>
    <property type="match status" value="1"/>
</dbReference>
<dbReference type="PROSITE" id="PS50262">
    <property type="entry name" value="G_PROTEIN_RECEP_F1_2"/>
    <property type="match status" value="1"/>
</dbReference>
<evidence type="ECO:0000250" key="1"/>
<evidence type="ECO:0000255" key="2"/>
<evidence type="ECO:0000255" key="3">
    <source>
        <dbReference type="PROSITE-ProRule" id="PRU00521"/>
    </source>
</evidence>
<organism>
    <name type="scientific">Bos taurus</name>
    <name type="common">Bovine</name>
    <dbReference type="NCBI Taxonomy" id="9913"/>
    <lineage>
        <taxon>Eukaryota</taxon>
        <taxon>Metazoa</taxon>
        <taxon>Chordata</taxon>
        <taxon>Craniata</taxon>
        <taxon>Vertebrata</taxon>
        <taxon>Euteleostomi</taxon>
        <taxon>Mammalia</taxon>
        <taxon>Eutheria</taxon>
        <taxon>Laurasiatheria</taxon>
        <taxon>Artiodactyla</taxon>
        <taxon>Ruminantia</taxon>
        <taxon>Pecora</taxon>
        <taxon>Bovidae</taxon>
        <taxon>Bovinae</taxon>
        <taxon>Bos</taxon>
    </lineage>
</organism>
<sequence length="379" mass="42875">MDLGKPMKNVLVVALLVIFQVCLCQDEVTDNYIGDNTTVDYTLYESVCFKKDVRNFKAWFLPIMYSIICFVGLLGNGLVMLTYIYFKRLKTMTDTYLLNLALADILFLLTLPFWAYSAAKSWVFGVHVCKLIFGIYKISFFSGMLLLLCISIDRYVAIVQAVSAHRHRARVLLISKLSCLGIWMLAIVLSTPEVMYSGIQKSSSEQALRCSLVTEHVEALITIQVAQMVVGFLIPLMAMSFCYLVIIRTLLQARNFERNKAIKVIIAVVVVFVAFQLPYNGVVLAHTVANFNITSGTSCELSKQLNIAYDVTYSLACVRCCVNPFLYAFIGVKFRSDLFKLFKDLGCLSQEQLRQWSFCRHTRRSSMSVEAETTTTFSP</sequence>
<comment type="function">
    <text evidence="1">Receptor for the MIP-3-beta chemokine.</text>
</comment>
<comment type="subcellular location">
    <subcellularLocation>
        <location>Cell membrane</location>
        <topology>Multi-pass membrane protein</topology>
    </subcellularLocation>
</comment>
<comment type="similarity">
    <text evidence="3">Belongs to the G-protein coupled receptor 1 family.</text>
</comment>
<keyword id="KW-1003">Cell membrane</keyword>
<keyword id="KW-1015">Disulfide bond</keyword>
<keyword id="KW-0297">G-protein coupled receptor</keyword>
<keyword id="KW-0325">Glycoprotein</keyword>
<keyword id="KW-0472">Membrane</keyword>
<keyword id="KW-0675">Receptor</keyword>
<keyword id="KW-1185">Reference proteome</keyword>
<keyword id="KW-0732">Signal</keyword>
<keyword id="KW-0807">Transducer</keyword>
<keyword id="KW-0812">Transmembrane</keyword>
<keyword id="KW-1133">Transmembrane helix</keyword>
<accession>Q5MD62</accession>
<protein>
    <recommendedName>
        <fullName>C-C chemokine receptor type 7</fullName>
        <shortName>C-C CKR-7</shortName>
        <shortName>CC-CKR-7</shortName>
        <shortName>CCR-7</shortName>
    </recommendedName>
    <cdAntigenName>CD197</cdAntigenName>
</protein>
<name>CCR7_BOVIN</name>
<gene>
    <name type="primary">CCR7</name>
</gene>
<proteinExistence type="evidence at transcript level"/>